<protein>
    <recommendedName>
        <fullName evidence="1">3-dehydroquinate synthase</fullName>
        <shortName evidence="1">DHQS</shortName>
        <ecNumber evidence="1">4.2.3.4</ecNumber>
    </recommendedName>
</protein>
<organism>
    <name type="scientific">Pseudomonas fluorescens (strain SBW25)</name>
    <dbReference type="NCBI Taxonomy" id="216595"/>
    <lineage>
        <taxon>Bacteria</taxon>
        <taxon>Pseudomonadati</taxon>
        <taxon>Pseudomonadota</taxon>
        <taxon>Gammaproteobacteria</taxon>
        <taxon>Pseudomonadales</taxon>
        <taxon>Pseudomonadaceae</taxon>
        <taxon>Pseudomonas</taxon>
    </lineage>
</organism>
<feature type="chain" id="PRO_1000202918" description="3-dehydroquinate synthase">
    <location>
        <begin position="1"/>
        <end position="366"/>
    </location>
</feature>
<feature type="binding site" evidence="1">
    <location>
        <begin position="69"/>
        <end position="74"/>
    </location>
    <ligand>
        <name>NAD(+)</name>
        <dbReference type="ChEBI" id="CHEBI:57540"/>
    </ligand>
</feature>
<feature type="binding site" evidence="1">
    <location>
        <begin position="103"/>
        <end position="107"/>
    </location>
    <ligand>
        <name>NAD(+)</name>
        <dbReference type="ChEBI" id="CHEBI:57540"/>
    </ligand>
</feature>
<feature type="binding site" evidence="1">
    <location>
        <begin position="127"/>
        <end position="128"/>
    </location>
    <ligand>
        <name>NAD(+)</name>
        <dbReference type="ChEBI" id="CHEBI:57540"/>
    </ligand>
</feature>
<feature type="binding site" evidence="1">
    <location>
        <position position="140"/>
    </location>
    <ligand>
        <name>NAD(+)</name>
        <dbReference type="ChEBI" id="CHEBI:57540"/>
    </ligand>
</feature>
<feature type="binding site" evidence="1">
    <location>
        <position position="149"/>
    </location>
    <ligand>
        <name>NAD(+)</name>
        <dbReference type="ChEBI" id="CHEBI:57540"/>
    </ligand>
</feature>
<feature type="binding site" evidence="1">
    <location>
        <begin position="167"/>
        <end position="170"/>
    </location>
    <ligand>
        <name>NAD(+)</name>
        <dbReference type="ChEBI" id="CHEBI:57540"/>
    </ligand>
</feature>
<feature type="binding site" evidence="1">
    <location>
        <position position="182"/>
    </location>
    <ligand>
        <name>Zn(2+)</name>
        <dbReference type="ChEBI" id="CHEBI:29105"/>
    </ligand>
</feature>
<feature type="binding site" evidence="1">
    <location>
        <position position="245"/>
    </location>
    <ligand>
        <name>Zn(2+)</name>
        <dbReference type="ChEBI" id="CHEBI:29105"/>
    </ligand>
</feature>
<feature type="binding site" evidence="1">
    <location>
        <position position="262"/>
    </location>
    <ligand>
        <name>Zn(2+)</name>
        <dbReference type="ChEBI" id="CHEBI:29105"/>
    </ligand>
</feature>
<accession>C3KAI3</accession>
<proteinExistence type="inferred from homology"/>
<comment type="function">
    <text evidence="1">Catalyzes the conversion of 3-deoxy-D-arabino-heptulosonate 7-phosphate (DAHP) to dehydroquinate (DHQ).</text>
</comment>
<comment type="catalytic activity">
    <reaction evidence="1">
        <text>7-phospho-2-dehydro-3-deoxy-D-arabino-heptonate = 3-dehydroquinate + phosphate</text>
        <dbReference type="Rhea" id="RHEA:21968"/>
        <dbReference type="ChEBI" id="CHEBI:32364"/>
        <dbReference type="ChEBI" id="CHEBI:43474"/>
        <dbReference type="ChEBI" id="CHEBI:58394"/>
        <dbReference type="EC" id="4.2.3.4"/>
    </reaction>
</comment>
<comment type="cofactor">
    <cofactor evidence="1">
        <name>Co(2+)</name>
        <dbReference type="ChEBI" id="CHEBI:48828"/>
    </cofactor>
    <cofactor evidence="1">
        <name>Zn(2+)</name>
        <dbReference type="ChEBI" id="CHEBI:29105"/>
    </cofactor>
    <text evidence="1">Binds 1 divalent metal cation per subunit. Can use either Co(2+) or Zn(2+).</text>
</comment>
<comment type="cofactor">
    <cofactor evidence="1">
        <name>NAD(+)</name>
        <dbReference type="ChEBI" id="CHEBI:57540"/>
    </cofactor>
</comment>
<comment type="pathway">
    <text evidence="1">Metabolic intermediate biosynthesis; chorismate biosynthesis; chorismate from D-erythrose 4-phosphate and phosphoenolpyruvate: step 2/7.</text>
</comment>
<comment type="subcellular location">
    <subcellularLocation>
        <location evidence="1">Cytoplasm</location>
    </subcellularLocation>
</comment>
<comment type="similarity">
    <text evidence="1">Belongs to the sugar phosphate cyclases superfamily. Dehydroquinate synthase family.</text>
</comment>
<reference key="1">
    <citation type="journal article" date="2009" name="Genome Biol.">
        <title>Genomic and genetic analyses of diversity and plant interactions of Pseudomonas fluorescens.</title>
        <authorList>
            <person name="Silby M.W."/>
            <person name="Cerdeno-Tarraga A.M."/>
            <person name="Vernikos G.S."/>
            <person name="Giddens S.R."/>
            <person name="Jackson R.W."/>
            <person name="Preston G.M."/>
            <person name="Zhang X.-X."/>
            <person name="Moon C.D."/>
            <person name="Gehrig S.M."/>
            <person name="Godfrey S.A.C."/>
            <person name="Knight C.G."/>
            <person name="Malone J.G."/>
            <person name="Robinson Z."/>
            <person name="Spiers A.J."/>
            <person name="Harris S."/>
            <person name="Challis G.L."/>
            <person name="Yaxley A.M."/>
            <person name="Harris D."/>
            <person name="Seeger K."/>
            <person name="Murphy L."/>
            <person name="Rutter S."/>
            <person name="Squares R."/>
            <person name="Quail M.A."/>
            <person name="Saunders E."/>
            <person name="Mavromatis K."/>
            <person name="Brettin T.S."/>
            <person name="Bentley S.D."/>
            <person name="Hothersall J."/>
            <person name="Stephens E."/>
            <person name="Thomas C.M."/>
            <person name="Parkhill J."/>
            <person name="Levy S.B."/>
            <person name="Rainey P.B."/>
            <person name="Thomson N.R."/>
        </authorList>
    </citation>
    <scope>NUCLEOTIDE SEQUENCE [LARGE SCALE GENOMIC DNA]</scope>
    <source>
        <strain>SBW25</strain>
    </source>
</reference>
<sequence>MQTLKVDLGERSYPIHIGEGLLDQPELLAPHIAGRQVAIISNETVAPLYLERLNRSLAAYSVISVILPDGEAHKNWETLQLIFDGLLTARHDRRTTVIALGGGVIGDMAGFAAACYQRGVDFIQVPTTLLSQVDSSVGGKTGINHPLGKNMVGAFYQPQAVLIDTATLNTLPPRELSAGLAEVIKYGLICDEPFLTWLEEHVDALRNLDQVALTEAISRSCAAKALVVNADERESGVRATLNLGHTFGHAIETHMGYGVWLHGEAVAAGTVMALDMSQRLGWISAQERDRGIRLFQRAGLPVIPPEEMTEADFLEHMAIDKKVIDGRLRLVLLRHMGEAVVTDDYPKEILQATLGADYRALAQLKG</sequence>
<name>AROB_PSEFS</name>
<keyword id="KW-0028">Amino-acid biosynthesis</keyword>
<keyword id="KW-0057">Aromatic amino acid biosynthesis</keyword>
<keyword id="KW-0170">Cobalt</keyword>
<keyword id="KW-0963">Cytoplasm</keyword>
<keyword id="KW-0456">Lyase</keyword>
<keyword id="KW-0479">Metal-binding</keyword>
<keyword id="KW-0520">NAD</keyword>
<keyword id="KW-0547">Nucleotide-binding</keyword>
<keyword id="KW-0862">Zinc</keyword>
<dbReference type="EC" id="4.2.3.4" evidence="1"/>
<dbReference type="EMBL" id="AM181176">
    <property type="protein sequence ID" value="CAY46689.1"/>
    <property type="molecule type" value="Genomic_DNA"/>
</dbReference>
<dbReference type="RefSeq" id="WP_012721816.1">
    <property type="nucleotide sequence ID" value="NC_012660.1"/>
</dbReference>
<dbReference type="SMR" id="C3KAI3"/>
<dbReference type="STRING" id="294.SRM1_00463"/>
<dbReference type="GeneID" id="93462012"/>
<dbReference type="eggNOG" id="COG0337">
    <property type="taxonomic scope" value="Bacteria"/>
</dbReference>
<dbReference type="HOGENOM" id="CLU_001201_0_2_6"/>
<dbReference type="OrthoDB" id="9806583at2"/>
<dbReference type="UniPathway" id="UPA00053">
    <property type="reaction ID" value="UER00085"/>
</dbReference>
<dbReference type="GO" id="GO:0005737">
    <property type="term" value="C:cytoplasm"/>
    <property type="evidence" value="ECO:0007669"/>
    <property type="project" value="UniProtKB-SubCell"/>
</dbReference>
<dbReference type="GO" id="GO:0003856">
    <property type="term" value="F:3-dehydroquinate synthase activity"/>
    <property type="evidence" value="ECO:0007669"/>
    <property type="project" value="UniProtKB-UniRule"/>
</dbReference>
<dbReference type="GO" id="GO:0046872">
    <property type="term" value="F:metal ion binding"/>
    <property type="evidence" value="ECO:0007669"/>
    <property type="project" value="UniProtKB-KW"/>
</dbReference>
<dbReference type="GO" id="GO:0000166">
    <property type="term" value="F:nucleotide binding"/>
    <property type="evidence" value="ECO:0007669"/>
    <property type="project" value="UniProtKB-KW"/>
</dbReference>
<dbReference type="GO" id="GO:0008652">
    <property type="term" value="P:amino acid biosynthetic process"/>
    <property type="evidence" value="ECO:0007669"/>
    <property type="project" value="UniProtKB-KW"/>
</dbReference>
<dbReference type="GO" id="GO:0009073">
    <property type="term" value="P:aromatic amino acid family biosynthetic process"/>
    <property type="evidence" value="ECO:0007669"/>
    <property type="project" value="UniProtKB-KW"/>
</dbReference>
<dbReference type="GO" id="GO:0009423">
    <property type="term" value="P:chorismate biosynthetic process"/>
    <property type="evidence" value="ECO:0007669"/>
    <property type="project" value="UniProtKB-UniRule"/>
</dbReference>
<dbReference type="CDD" id="cd08195">
    <property type="entry name" value="DHQS"/>
    <property type="match status" value="1"/>
</dbReference>
<dbReference type="FunFam" id="1.20.1090.10:FF:000002">
    <property type="entry name" value="3-dehydroquinate synthase"/>
    <property type="match status" value="1"/>
</dbReference>
<dbReference type="FunFam" id="3.40.50.1970:FF:000001">
    <property type="entry name" value="3-dehydroquinate synthase"/>
    <property type="match status" value="1"/>
</dbReference>
<dbReference type="Gene3D" id="3.40.50.1970">
    <property type="match status" value="1"/>
</dbReference>
<dbReference type="Gene3D" id="1.20.1090.10">
    <property type="entry name" value="Dehydroquinate synthase-like - alpha domain"/>
    <property type="match status" value="1"/>
</dbReference>
<dbReference type="HAMAP" id="MF_00110">
    <property type="entry name" value="DHQ_synthase"/>
    <property type="match status" value="1"/>
</dbReference>
<dbReference type="InterPro" id="IPR050071">
    <property type="entry name" value="Dehydroquinate_synthase"/>
</dbReference>
<dbReference type="InterPro" id="IPR016037">
    <property type="entry name" value="DHQ_synth_AroB"/>
</dbReference>
<dbReference type="InterPro" id="IPR030963">
    <property type="entry name" value="DHQ_synth_fam"/>
</dbReference>
<dbReference type="InterPro" id="IPR030960">
    <property type="entry name" value="DHQS/DOIS_N"/>
</dbReference>
<dbReference type="InterPro" id="IPR056179">
    <property type="entry name" value="DHQS_C"/>
</dbReference>
<dbReference type="NCBIfam" id="TIGR01357">
    <property type="entry name" value="aroB"/>
    <property type="match status" value="1"/>
</dbReference>
<dbReference type="PANTHER" id="PTHR43622">
    <property type="entry name" value="3-DEHYDROQUINATE SYNTHASE"/>
    <property type="match status" value="1"/>
</dbReference>
<dbReference type="PANTHER" id="PTHR43622:SF7">
    <property type="entry name" value="3-DEHYDROQUINATE SYNTHASE, CHLOROPLASTIC"/>
    <property type="match status" value="1"/>
</dbReference>
<dbReference type="Pfam" id="PF01761">
    <property type="entry name" value="DHQ_synthase"/>
    <property type="match status" value="1"/>
</dbReference>
<dbReference type="Pfam" id="PF24621">
    <property type="entry name" value="DHQS_C"/>
    <property type="match status" value="1"/>
</dbReference>
<dbReference type="PIRSF" id="PIRSF001455">
    <property type="entry name" value="DHQ_synth"/>
    <property type="match status" value="1"/>
</dbReference>
<dbReference type="SUPFAM" id="SSF56796">
    <property type="entry name" value="Dehydroquinate synthase-like"/>
    <property type="match status" value="1"/>
</dbReference>
<evidence type="ECO:0000255" key="1">
    <source>
        <dbReference type="HAMAP-Rule" id="MF_00110"/>
    </source>
</evidence>
<gene>
    <name evidence="1" type="primary">aroB</name>
    <name type="ordered locus">PFLU_0412</name>
</gene>